<name>TYR1_SCHPO</name>
<sequence>MKETFQVGIIGFGDMGRLYAEYISKAGWRVNVCDRPENYESIQATYGNGGYTVLKDGFQVSRTSDYILYSVEAEHIDKVVALYGPATKVGAIVGGQTSCKAPEMNAFEKYLPEDVDIISCHSMHGPKVNPKSQPLVIIRHRASDEHFEIVNEILSCFKSSVVYLSAKEHDRITADTQAVTHAAFLTMGLAWHANNQYPWEINRWCGGIENIKMNLSMRIYSSKWHVYAGLAILNPEAQRQIQQYASSVTELFKLAISGKAKEYEDRIRNAGKFVFGENMDRNSSGLLLSDELLDQYSISNIPKDESKRNSHLSILAIVDSWSKLGIHPQNHMICSTPLFRLWVGVSEYVFRHPGLLDSCIYTATKHNDFSPDDLEFVVAVRSWSECVAAKDFTTYKKRFLETQEYFRPRFEEATRVGNAMISKLLENLQKM</sequence>
<dbReference type="EC" id="1.3.1.13"/>
<dbReference type="EMBL" id="CU329672">
    <property type="protein sequence ID" value="CAA19302.1"/>
    <property type="molecule type" value="Genomic_DNA"/>
</dbReference>
<dbReference type="EMBL" id="D89213">
    <property type="protein sequence ID" value="BAA13874.1"/>
    <property type="molecule type" value="mRNA"/>
</dbReference>
<dbReference type="PIR" id="T41005">
    <property type="entry name" value="T41005"/>
</dbReference>
<dbReference type="PIR" id="T43017">
    <property type="entry name" value="T43017"/>
</dbReference>
<dbReference type="RefSeq" id="NP_588529.1">
    <property type="nucleotide sequence ID" value="NM_001023517.2"/>
</dbReference>
<dbReference type="SMR" id="O60078"/>
<dbReference type="FunCoup" id="O60078">
    <property type="interactions" value="107"/>
</dbReference>
<dbReference type="STRING" id="284812.O60078"/>
<dbReference type="PaxDb" id="4896-SPCC1494.04c.1"/>
<dbReference type="EnsemblFungi" id="SPCC1494.04c.1">
    <property type="protein sequence ID" value="SPCC1494.04c.1:pep"/>
    <property type="gene ID" value="SPCC1494.04c"/>
</dbReference>
<dbReference type="GeneID" id="2539274"/>
<dbReference type="KEGG" id="spo:2539274"/>
<dbReference type="PomBase" id="SPCC1494.04c">
    <property type="gene designation" value="tyr1"/>
</dbReference>
<dbReference type="VEuPathDB" id="FungiDB:SPCC1494.04c"/>
<dbReference type="eggNOG" id="KOG2380">
    <property type="taxonomic scope" value="Eukaryota"/>
</dbReference>
<dbReference type="HOGENOM" id="CLU_031403_1_0_1"/>
<dbReference type="InParanoid" id="O60078"/>
<dbReference type="OMA" id="WRVNACD"/>
<dbReference type="PhylomeDB" id="O60078"/>
<dbReference type="UniPathway" id="UPA00122">
    <property type="reaction ID" value="UER00962"/>
</dbReference>
<dbReference type="PRO" id="PR:O60078"/>
<dbReference type="Proteomes" id="UP000002485">
    <property type="component" value="Chromosome III"/>
</dbReference>
<dbReference type="GO" id="GO:0005829">
    <property type="term" value="C:cytosol"/>
    <property type="evidence" value="ECO:0007005"/>
    <property type="project" value="PomBase"/>
</dbReference>
<dbReference type="GO" id="GO:0070403">
    <property type="term" value="F:NAD+ binding"/>
    <property type="evidence" value="ECO:0000318"/>
    <property type="project" value="GO_Central"/>
</dbReference>
<dbReference type="GO" id="GO:0050661">
    <property type="term" value="F:NADP binding"/>
    <property type="evidence" value="ECO:0007669"/>
    <property type="project" value="InterPro"/>
</dbReference>
<dbReference type="GO" id="GO:0008977">
    <property type="term" value="F:prephenate dehydrogenase (NAD+) activity"/>
    <property type="evidence" value="ECO:0000315"/>
    <property type="project" value="PomBase"/>
</dbReference>
<dbReference type="GO" id="GO:0004665">
    <property type="term" value="F:prephenate dehydrogenase (NADP+) activity"/>
    <property type="evidence" value="ECO:0007669"/>
    <property type="project" value="UniProtKB-EC"/>
</dbReference>
<dbReference type="GO" id="GO:0006571">
    <property type="term" value="P:tyrosine biosynthetic process"/>
    <property type="evidence" value="ECO:0000315"/>
    <property type="project" value="PomBase"/>
</dbReference>
<dbReference type="FunFam" id="1.10.3660.10:FF:000004">
    <property type="entry name" value="Prephenate dehydrogenase [NADP(+)]"/>
    <property type="match status" value="1"/>
</dbReference>
<dbReference type="FunFam" id="3.40.50.720:FF:000339">
    <property type="entry name" value="Prephenate dehydrogenase [NADP(+)]"/>
    <property type="match status" value="1"/>
</dbReference>
<dbReference type="Gene3D" id="1.10.3660.10">
    <property type="entry name" value="6-phosphogluconate dehydrogenase C-terminal like domain"/>
    <property type="match status" value="2"/>
</dbReference>
<dbReference type="Gene3D" id="3.40.50.720">
    <property type="entry name" value="NAD(P)-binding Rossmann-like Domain"/>
    <property type="match status" value="1"/>
</dbReference>
<dbReference type="InterPro" id="IPR008927">
    <property type="entry name" value="6-PGluconate_DH-like_C_sf"/>
</dbReference>
<dbReference type="InterPro" id="IPR006115">
    <property type="entry name" value="6PGDH_NADP-bd"/>
</dbReference>
<dbReference type="InterPro" id="IPR036291">
    <property type="entry name" value="NAD(P)-bd_dom_sf"/>
</dbReference>
<dbReference type="InterPro" id="IPR050812">
    <property type="entry name" value="Preph/Arog_dehydrog"/>
</dbReference>
<dbReference type="InterPro" id="IPR003099">
    <property type="entry name" value="Prephen_DH"/>
</dbReference>
<dbReference type="InterPro" id="IPR012385">
    <property type="entry name" value="Prephenate_DH_fun"/>
</dbReference>
<dbReference type="PANTHER" id="PTHR21363">
    <property type="entry name" value="PREPHENATE DEHYDROGENASE"/>
    <property type="match status" value="1"/>
</dbReference>
<dbReference type="PANTHER" id="PTHR21363:SF0">
    <property type="entry name" value="PREPHENATE DEHYDROGENASE [NADP(+)]"/>
    <property type="match status" value="1"/>
</dbReference>
<dbReference type="Pfam" id="PF03446">
    <property type="entry name" value="NAD_binding_2"/>
    <property type="match status" value="1"/>
</dbReference>
<dbReference type="PIRSF" id="PIRSF036510">
    <property type="entry name" value="PDH_fung"/>
    <property type="match status" value="1"/>
</dbReference>
<dbReference type="SUPFAM" id="SSF48179">
    <property type="entry name" value="6-phosphogluconate dehydrogenase C-terminal domain-like"/>
    <property type="match status" value="2"/>
</dbReference>
<dbReference type="SUPFAM" id="SSF51735">
    <property type="entry name" value="NAD(P)-binding Rossmann-fold domains"/>
    <property type="match status" value="1"/>
</dbReference>
<dbReference type="PROSITE" id="PS51176">
    <property type="entry name" value="PDH_ADH"/>
    <property type="match status" value="1"/>
</dbReference>
<proteinExistence type="evidence at transcript level"/>
<comment type="catalytic activity">
    <reaction>
        <text>prephenate + NADP(+) = 3-(4-hydroxyphenyl)pyruvate + CO2 + NADPH</text>
        <dbReference type="Rhea" id="RHEA:21640"/>
        <dbReference type="ChEBI" id="CHEBI:16526"/>
        <dbReference type="ChEBI" id="CHEBI:29934"/>
        <dbReference type="ChEBI" id="CHEBI:36242"/>
        <dbReference type="ChEBI" id="CHEBI:57783"/>
        <dbReference type="ChEBI" id="CHEBI:58349"/>
        <dbReference type="EC" id="1.3.1.13"/>
    </reaction>
</comment>
<comment type="pathway">
    <text>Amino-acid biosynthesis; L-tyrosine biosynthesis; (4-hydroxyphenyl)pyruvate from prephenate (NADP(+) route): step 1/1.</text>
</comment>
<comment type="subcellular location">
    <subcellularLocation>
        <location evidence="3">Cytoplasm</location>
    </subcellularLocation>
</comment>
<comment type="similarity">
    <text evidence="4">Belongs to the prephenate/arogenate dehydrogenase family.</text>
</comment>
<organism>
    <name type="scientific">Schizosaccharomyces pombe (strain 972 / ATCC 24843)</name>
    <name type="common">Fission yeast</name>
    <dbReference type="NCBI Taxonomy" id="284812"/>
    <lineage>
        <taxon>Eukaryota</taxon>
        <taxon>Fungi</taxon>
        <taxon>Dikarya</taxon>
        <taxon>Ascomycota</taxon>
        <taxon>Taphrinomycotina</taxon>
        <taxon>Schizosaccharomycetes</taxon>
        <taxon>Schizosaccharomycetales</taxon>
        <taxon>Schizosaccharomycetaceae</taxon>
        <taxon>Schizosaccharomyces</taxon>
    </lineage>
</organism>
<accession>O60078</accession>
<accession>P78863</accession>
<evidence type="ECO:0000255" key="1"/>
<evidence type="ECO:0000255" key="2">
    <source>
        <dbReference type="PROSITE-ProRule" id="PRU00522"/>
    </source>
</evidence>
<evidence type="ECO:0000269" key="3">
    <source>
    </source>
</evidence>
<evidence type="ECO:0000305" key="4"/>
<keyword id="KW-0028">Amino-acid biosynthesis</keyword>
<keyword id="KW-0057">Aromatic amino acid biosynthesis</keyword>
<keyword id="KW-0963">Cytoplasm</keyword>
<keyword id="KW-0521">NADP</keyword>
<keyword id="KW-0560">Oxidoreductase</keyword>
<keyword id="KW-1185">Reference proteome</keyword>
<keyword id="KW-0827">Tyrosine biosynthesis</keyword>
<feature type="chain" id="PRO_0000119207" description="Probable prephenate dehydrogenase [NADP(+)]">
    <location>
        <begin position="1"/>
        <end position="431"/>
    </location>
</feature>
<feature type="domain" description="Prephenate/arogenate dehydrogenase" evidence="2">
    <location>
        <begin position="5"/>
        <end position="285"/>
    </location>
</feature>
<feature type="binding site" evidence="1">
    <location>
        <begin position="5"/>
        <end position="34"/>
    </location>
    <ligand>
        <name>NADP(+)</name>
        <dbReference type="ChEBI" id="CHEBI:58349"/>
    </ligand>
</feature>
<feature type="sequence conflict" description="In Ref. 2; BAA13874." evidence="4" ref="2">
    <original>QKM</original>
    <variation>KKCDFLIAAFCVYNS</variation>
    <location>
        <begin position="429"/>
        <end position="431"/>
    </location>
</feature>
<reference key="1">
    <citation type="journal article" date="2002" name="Nature">
        <title>The genome sequence of Schizosaccharomyces pombe.</title>
        <authorList>
            <person name="Wood V."/>
            <person name="Gwilliam R."/>
            <person name="Rajandream M.A."/>
            <person name="Lyne M.H."/>
            <person name="Lyne R."/>
            <person name="Stewart A."/>
            <person name="Sgouros J.G."/>
            <person name="Peat N."/>
            <person name="Hayles J."/>
            <person name="Baker S.G."/>
            <person name="Basham D."/>
            <person name="Bowman S."/>
            <person name="Brooks K."/>
            <person name="Brown D."/>
            <person name="Brown S."/>
            <person name="Chillingworth T."/>
            <person name="Churcher C.M."/>
            <person name="Collins M."/>
            <person name="Connor R."/>
            <person name="Cronin A."/>
            <person name="Davis P."/>
            <person name="Feltwell T."/>
            <person name="Fraser A."/>
            <person name="Gentles S."/>
            <person name="Goble A."/>
            <person name="Hamlin N."/>
            <person name="Harris D.E."/>
            <person name="Hidalgo J."/>
            <person name="Hodgson G."/>
            <person name="Holroyd S."/>
            <person name="Hornsby T."/>
            <person name="Howarth S."/>
            <person name="Huckle E.J."/>
            <person name="Hunt S."/>
            <person name="Jagels K."/>
            <person name="James K.D."/>
            <person name="Jones L."/>
            <person name="Jones M."/>
            <person name="Leather S."/>
            <person name="McDonald S."/>
            <person name="McLean J."/>
            <person name="Mooney P."/>
            <person name="Moule S."/>
            <person name="Mungall K.L."/>
            <person name="Murphy L.D."/>
            <person name="Niblett D."/>
            <person name="Odell C."/>
            <person name="Oliver K."/>
            <person name="O'Neil S."/>
            <person name="Pearson D."/>
            <person name="Quail M.A."/>
            <person name="Rabbinowitsch E."/>
            <person name="Rutherford K.M."/>
            <person name="Rutter S."/>
            <person name="Saunders D."/>
            <person name="Seeger K."/>
            <person name="Sharp S."/>
            <person name="Skelton J."/>
            <person name="Simmonds M.N."/>
            <person name="Squares R."/>
            <person name="Squares S."/>
            <person name="Stevens K."/>
            <person name="Taylor K."/>
            <person name="Taylor R.G."/>
            <person name="Tivey A."/>
            <person name="Walsh S.V."/>
            <person name="Warren T."/>
            <person name="Whitehead S."/>
            <person name="Woodward J.R."/>
            <person name="Volckaert G."/>
            <person name="Aert R."/>
            <person name="Robben J."/>
            <person name="Grymonprez B."/>
            <person name="Weltjens I."/>
            <person name="Vanstreels E."/>
            <person name="Rieger M."/>
            <person name="Schaefer M."/>
            <person name="Mueller-Auer S."/>
            <person name="Gabel C."/>
            <person name="Fuchs M."/>
            <person name="Duesterhoeft A."/>
            <person name="Fritzc C."/>
            <person name="Holzer E."/>
            <person name="Moestl D."/>
            <person name="Hilbert H."/>
            <person name="Borzym K."/>
            <person name="Langer I."/>
            <person name="Beck A."/>
            <person name="Lehrach H."/>
            <person name="Reinhardt R."/>
            <person name="Pohl T.M."/>
            <person name="Eger P."/>
            <person name="Zimmermann W."/>
            <person name="Wedler H."/>
            <person name="Wambutt R."/>
            <person name="Purnelle B."/>
            <person name="Goffeau A."/>
            <person name="Cadieu E."/>
            <person name="Dreano S."/>
            <person name="Gloux S."/>
            <person name="Lelaure V."/>
            <person name="Mottier S."/>
            <person name="Galibert F."/>
            <person name="Aves S.J."/>
            <person name="Xiang Z."/>
            <person name="Hunt C."/>
            <person name="Moore K."/>
            <person name="Hurst S.M."/>
            <person name="Lucas M."/>
            <person name="Rochet M."/>
            <person name="Gaillardin C."/>
            <person name="Tallada V.A."/>
            <person name="Garzon A."/>
            <person name="Thode G."/>
            <person name="Daga R.R."/>
            <person name="Cruzado L."/>
            <person name="Jimenez J."/>
            <person name="Sanchez M."/>
            <person name="del Rey F."/>
            <person name="Benito J."/>
            <person name="Dominguez A."/>
            <person name="Revuelta J.L."/>
            <person name="Moreno S."/>
            <person name="Armstrong J."/>
            <person name="Forsburg S.L."/>
            <person name="Cerutti L."/>
            <person name="Lowe T."/>
            <person name="McCombie W.R."/>
            <person name="Paulsen I."/>
            <person name="Potashkin J."/>
            <person name="Shpakovski G.V."/>
            <person name="Ussery D."/>
            <person name="Barrell B.G."/>
            <person name="Nurse P."/>
        </authorList>
    </citation>
    <scope>NUCLEOTIDE SEQUENCE [LARGE SCALE GENOMIC DNA]</scope>
    <source>
        <strain>972 / ATCC 24843</strain>
    </source>
</reference>
<reference key="2">
    <citation type="journal article" date="1997" name="DNA Res.">
        <title>Identification of open reading frames in Schizosaccharomyces pombe cDNAs.</title>
        <authorList>
            <person name="Yoshioka S."/>
            <person name="Kato K."/>
            <person name="Nakai K."/>
            <person name="Okayama H."/>
            <person name="Nojima H."/>
        </authorList>
    </citation>
    <scope>NUCLEOTIDE SEQUENCE [LARGE SCALE MRNA] OF 31-431</scope>
    <source>
        <strain>PR745</strain>
    </source>
</reference>
<reference key="3">
    <citation type="journal article" date="2006" name="Nat. Biotechnol.">
        <title>ORFeome cloning and global analysis of protein localization in the fission yeast Schizosaccharomyces pombe.</title>
        <authorList>
            <person name="Matsuyama A."/>
            <person name="Arai R."/>
            <person name="Yashiroda Y."/>
            <person name="Shirai A."/>
            <person name="Kamata A."/>
            <person name="Sekido S."/>
            <person name="Kobayashi Y."/>
            <person name="Hashimoto A."/>
            <person name="Hamamoto M."/>
            <person name="Hiraoka Y."/>
            <person name="Horinouchi S."/>
            <person name="Yoshida M."/>
        </authorList>
    </citation>
    <scope>SUBCELLULAR LOCATION [LARGE SCALE ANALYSIS]</scope>
</reference>
<protein>
    <recommendedName>
        <fullName>Probable prephenate dehydrogenase [NADP(+)]</fullName>
        <shortName>PRDH</shortName>
        <ecNumber>1.3.1.13</ecNumber>
    </recommendedName>
</protein>
<gene>
    <name type="primary">tyr1</name>
    <name type="ORF">SPCC1494.04c</name>
</gene>